<organism>
    <name type="scientific">Haemophilus influenzae (strain 86-028NP)</name>
    <dbReference type="NCBI Taxonomy" id="281310"/>
    <lineage>
        <taxon>Bacteria</taxon>
        <taxon>Pseudomonadati</taxon>
        <taxon>Pseudomonadota</taxon>
        <taxon>Gammaproteobacteria</taxon>
        <taxon>Pasteurellales</taxon>
        <taxon>Pasteurellaceae</taxon>
        <taxon>Haemophilus</taxon>
    </lineage>
</organism>
<dbReference type="EC" id="2.7.1.24" evidence="1"/>
<dbReference type="EMBL" id="CP000057">
    <property type="protein sequence ID" value="AAX87929.1"/>
    <property type="status" value="ALT_INIT"/>
    <property type="molecule type" value="Genomic_DNA"/>
</dbReference>
<dbReference type="RefSeq" id="WP_038440314.1">
    <property type="nucleotide sequence ID" value="NC_007146.2"/>
</dbReference>
<dbReference type="SMR" id="Q4QM18"/>
<dbReference type="GeneID" id="93219927"/>
<dbReference type="KEGG" id="hit:NTHI1055"/>
<dbReference type="HOGENOM" id="CLU_057180_1_2_6"/>
<dbReference type="UniPathway" id="UPA00241">
    <property type="reaction ID" value="UER00356"/>
</dbReference>
<dbReference type="Proteomes" id="UP000002525">
    <property type="component" value="Chromosome"/>
</dbReference>
<dbReference type="GO" id="GO:0005737">
    <property type="term" value="C:cytoplasm"/>
    <property type="evidence" value="ECO:0007669"/>
    <property type="project" value="UniProtKB-SubCell"/>
</dbReference>
<dbReference type="GO" id="GO:0005524">
    <property type="term" value="F:ATP binding"/>
    <property type="evidence" value="ECO:0007669"/>
    <property type="project" value="UniProtKB-UniRule"/>
</dbReference>
<dbReference type="GO" id="GO:0004140">
    <property type="term" value="F:dephospho-CoA kinase activity"/>
    <property type="evidence" value="ECO:0007669"/>
    <property type="project" value="UniProtKB-UniRule"/>
</dbReference>
<dbReference type="GO" id="GO:0015937">
    <property type="term" value="P:coenzyme A biosynthetic process"/>
    <property type="evidence" value="ECO:0007669"/>
    <property type="project" value="UniProtKB-UniRule"/>
</dbReference>
<dbReference type="CDD" id="cd02022">
    <property type="entry name" value="DPCK"/>
    <property type="match status" value="1"/>
</dbReference>
<dbReference type="FunFam" id="3.40.50.300:FF:000518">
    <property type="entry name" value="Dephospho-CoA kinase"/>
    <property type="match status" value="1"/>
</dbReference>
<dbReference type="Gene3D" id="3.40.50.300">
    <property type="entry name" value="P-loop containing nucleotide triphosphate hydrolases"/>
    <property type="match status" value="1"/>
</dbReference>
<dbReference type="HAMAP" id="MF_00376">
    <property type="entry name" value="Dephospho_CoA_kinase"/>
    <property type="match status" value="1"/>
</dbReference>
<dbReference type="InterPro" id="IPR001977">
    <property type="entry name" value="Depp_CoAkinase"/>
</dbReference>
<dbReference type="InterPro" id="IPR027417">
    <property type="entry name" value="P-loop_NTPase"/>
</dbReference>
<dbReference type="NCBIfam" id="TIGR00152">
    <property type="entry name" value="dephospho-CoA kinase"/>
    <property type="match status" value="1"/>
</dbReference>
<dbReference type="PANTHER" id="PTHR10695:SF46">
    <property type="entry name" value="BIFUNCTIONAL COENZYME A SYNTHASE-RELATED"/>
    <property type="match status" value="1"/>
</dbReference>
<dbReference type="PANTHER" id="PTHR10695">
    <property type="entry name" value="DEPHOSPHO-COA KINASE-RELATED"/>
    <property type="match status" value="1"/>
</dbReference>
<dbReference type="Pfam" id="PF01121">
    <property type="entry name" value="CoaE"/>
    <property type="match status" value="1"/>
</dbReference>
<dbReference type="SUPFAM" id="SSF52540">
    <property type="entry name" value="P-loop containing nucleoside triphosphate hydrolases"/>
    <property type="match status" value="1"/>
</dbReference>
<dbReference type="PROSITE" id="PS51219">
    <property type="entry name" value="DPCK"/>
    <property type="match status" value="1"/>
</dbReference>
<accession>Q4QM18</accession>
<proteinExistence type="inferred from homology"/>
<protein>
    <recommendedName>
        <fullName evidence="1">Dephospho-CoA kinase</fullName>
        <ecNumber evidence="1">2.7.1.24</ecNumber>
    </recommendedName>
    <alternativeName>
        <fullName evidence="1">Dephosphocoenzyme A kinase</fullName>
    </alternativeName>
</protein>
<evidence type="ECO:0000255" key="1">
    <source>
        <dbReference type="HAMAP-Rule" id="MF_00376"/>
    </source>
</evidence>
<evidence type="ECO:0000305" key="2"/>
<feature type="chain" id="PRO_0000243294" description="Dephospho-CoA kinase">
    <location>
        <begin position="1"/>
        <end position="206"/>
    </location>
</feature>
<feature type="domain" description="DPCK" evidence="1">
    <location>
        <begin position="4"/>
        <end position="204"/>
    </location>
</feature>
<feature type="binding site" evidence="1">
    <location>
        <begin position="12"/>
        <end position="17"/>
    </location>
    <ligand>
        <name>ATP</name>
        <dbReference type="ChEBI" id="CHEBI:30616"/>
    </ligand>
</feature>
<reference key="1">
    <citation type="journal article" date="2005" name="J. Bacteriol.">
        <title>Genomic sequence of an otitis media isolate of nontypeable Haemophilus influenzae: comparative study with H. influenzae serotype d, strain KW20.</title>
        <authorList>
            <person name="Harrison A."/>
            <person name="Dyer D.W."/>
            <person name="Gillaspy A."/>
            <person name="Ray W.C."/>
            <person name="Mungur R."/>
            <person name="Carson M.B."/>
            <person name="Zhong H."/>
            <person name="Gipson J."/>
            <person name="Gipson M."/>
            <person name="Johnson L.S."/>
            <person name="Lewis L."/>
            <person name="Bakaletz L.O."/>
            <person name="Munson R.S. Jr."/>
        </authorList>
    </citation>
    <scope>NUCLEOTIDE SEQUENCE [LARGE SCALE GENOMIC DNA]</scope>
    <source>
        <strain>86-028NP</strain>
    </source>
</reference>
<keyword id="KW-0067">ATP-binding</keyword>
<keyword id="KW-0173">Coenzyme A biosynthesis</keyword>
<keyword id="KW-0963">Cytoplasm</keyword>
<keyword id="KW-0418">Kinase</keyword>
<keyword id="KW-0547">Nucleotide-binding</keyword>
<keyword id="KW-0808">Transferase</keyword>
<name>COAE_HAEI8</name>
<gene>
    <name evidence="1" type="primary">coaE</name>
    <name type="ordered locus">NTHI1055</name>
</gene>
<comment type="function">
    <text evidence="1">Catalyzes the phosphorylation of the 3'-hydroxyl group of dephosphocoenzyme A to form coenzyme A.</text>
</comment>
<comment type="catalytic activity">
    <reaction evidence="1">
        <text>3'-dephospho-CoA + ATP = ADP + CoA + H(+)</text>
        <dbReference type="Rhea" id="RHEA:18245"/>
        <dbReference type="ChEBI" id="CHEBI:15378"/>
        <dbReference type="ChEBI" id="CHEBI:30616"/>
        <dbReference type="ChEBI" id="CHEBI:57287"/>
        <dbReference type="ChEBI" id="CHEBI:57328"/>
        <dbReference type="ChEBI" id="CHEBI:456216"/>
        <dbReference type="EC" id="2.7.1.24"/>
    </reaction>
</comment>
<comment type="pathway">
    <text evidence="1">Cofactor biosynthesis; coenzyme A biosynthesis; CoA from (R)-pantothenate: step 5/5.</text>
</comment>
<comment type="subcellular location">
    <subcellularLocation>
        <location evidence="1">Cytoplasm</location>
    </subcellularLocation>
</comment>
<comment type="similarity">
    <text evidence="1">Belongs to the CoaE family.</text>
</comment>
<comment type="sequence caution" evidence="2">
    <conflict type="erroneous initiation">
        <sequence resource="EMBL-CDS" id="AAX87929"/>
    </conflict>
</comment>
<sequence length="206" mass="23319">MTYIVGLTGGIGSGKTTIANLFTDLGVPLVDADVVAREVVAKDSPLLSKIVEHFGAQILTEQGELNRAALRERVFNHDEDKLWLNNLLHPAIRERMKQKLAEQTAPYTLFVVPLLIENKLTALCDRILVVDVSPQTQLARSSQRDNNNFEQIQRIMNSQVSQQERLKWADDVINNDSELAQNLPHLQQKVLELHQFYLQQAENKNA</sequence>